<name>PYRB_SHIFL</name>
<evidence type="ECO:0000250" key="1"/>
<evidence type="ECO:0000255" key="2">
    <source>
        <dbReference type="HAMAP-Rule" id="MF_00001"/>
    </source>
</evidence>
<evidence type="ECO:0000305" key="3"/>
<protein>
    <recommendedName>
        <fullName evidence="2">Aspartate carbamoyltransferase catalytic subunit</fullName>
        <ecNumber evidence="2">2.1.3.2</ecNumber>
    </recommendedName>
    <alternativeName>
        <fullName evidence="2">Aspartate transcarbamylase</fullName>
        <shortName evidence="2">ATCase</shortName>
    </alternativeName>
</protein>
<reference key="1">
    <citation type="journal article" date="2002" name="Nucleic Acids Res.">
        <title>Genome sequence of Shigella flexneri 2a: insights into pathogenicity through comparison with genomes of Escherichia coli K12 and O157.</title>
        <authorList>
            <person name="Jin Q."/>
            <person name="Yuan Z."/>
            <person name="Xu J."/>
            <person name="Wang Y."/>
            <person name="Shen Y."/>
            <person name="Lu W."/>
            <person name="Wang J."/>
            <person name="Liu H."/>
            <person name="Yang J."/>
            <person name="Yang F."/>
            <person name="Zhang X."/>
            <person name="Zhang J."/>
            <person name="Yang G."/>
            <person name="Wu H."/>
            <person name="Qu D."/>
            <person name="Dong J."/>
            <person name="Sun L."/>
            <person name="Xue Y."/>
            <person name="Zhao A."/>
            <person name="Gao Y."/>
            <person name="Zhu J."/>
            <person name="Kan B."/>
            <person name="Ding K."/>
            <person name="Chen S."/>
            <person name="Cheng H."/>
            <person name="Yao Z."/>
            <person name="He B."/>
            <person name="Chen R."/>
            <person name="Ma D."/>
            <person name="Qiang B."/>
            <person name="Wen Y."/>
            <person name="Hou Y."/>
            <person name="Yu J."/>
        </authorList>
    </citation>
    <scope>NUCLEOTIDE SEQUENCE [LARGE SCALE GENOMIC DNA]</scope>
    <source>
        <strain>301 / Serotype 2a</strain>
    </source>
</reference>
<reference key="2">
    <citation type="journal article" date="2003" name="Infect. Immun.">
        <title>Complete genome sequence and comparative genomics of Shigella flexneri serotype 2a strain 2457T.</title>
        <authorList>
            <person name="Wei J."/>
            <person name="Goldberg M.B."/>
            <person name="Burland V."/>
            <person name="Venkatesan M.M."/>
            <person name="Deng W."/>
            <person name="Fournier G."/>
            <person name="Mayhew G.F."/>
            <person name="Plunkett G. III"/>
            <person name="Rose D.J."/>
            <person name="Darling A."/>
            <person name="Mau B."/>
            <person name="Perna N.T."/>
            <person name="Payne S.M."/>
            <person name="Runyen-Janecky L.J."/>
            <person name="Zhou S."/>
            <person name="Schwartz D.C."/>
            <person name="Blattner F.R."/>
        </authorList>
    </citation>
    <scope>NUCLEOTIDE SEQUENCE [LARGE SCALE GENOMIC DNA]</scope>
    <source>
        <strain>ATCC 700930 / 2457T / Serotype 2a</strain>
    </source>
</reference>
<proteinExistence type="inferred from homology"/>
<organism>
    <name type="scientific">Shigella flexneri</name>
    <dbReference type="NCBI Taxonomy" id="623"/>
    <lineage>
        <taxon>Bacteria</taxon>
        <taxon>Pseudomonadati</taxon>
        <taxon>Pseudomonadota</taxon>
        <taxon>Gammaproteobacteria</taxon>
        <taxon>Enterobacterales</taxon>
        <taxon>Enterobacteriaceae</taxon>
        <taxon>Shigella</taxon>
    </lineage>
</organism>
<comment type="function">
    <text evidence="2">Catalyzes the condensation of carbamoyl phosphate and aspartate to form carbamoyl aspartate and inorganic phosphate, the committed step in the de novo pyrimidine nucleotide biosynthesis pathway.</text>
</comment>
<comment type="catalytic activity">
    <reaction evidence="2">
        <text>carbamoyl phosphate + L-aspartate = N-carbamoyl-L-aspartate + phosphate + H(+)</text>
        <dbReference type="Rhea" id="RHEA:20013"/>
        <dbReference type="ChEBI" id="CHEBI:15378"/>
        <dbReference type="ChEBI" id="CHEBI:29991"/>
        <dbReference type="ChEBI" id="CHEBI:32814"/>
        <dbReference type="ChEBI" id="CHEBI:43474"/>
        <dbReference type="ChEBI" id="CHEBI:58228"/>
        <dbReference type="EC" id="2.1.3.2"/>
    </reaction>
</comment>
<comment type="pathway">
    <text evidence="2">Pyrimidine metabolism; UMP biosynthesis via de novo pathway; (S)-dihydroorotate from bicarbonate: step 2/3.</text>
</comment>
<comment type="subunit">
    <text evidence="2">Heterododecamer (2C3:3R2) of six catalytic PyrB chains organized as two trimers (C3), and six regulatory PyrI chains organized as three dimers (R2).</text>
</comment>
<comment type="similarity">
    <text evidence="2 3">Belongs to the aspartate/ornithine carbamoyltransferase superfamily. ATCase family.</text>
</comment>
<sequence>MANPLYQKHIISINDLSRDDLNLVLATAAKLKANPQPELLKHKVIASCFFEASTRTRLSFETSMHRLGASVVGFSDSANTSLGKKGETLADTISVISTYVDAIVMRHPQEGAARLATEFSGNVPVLNAGDGSNQHPTQTLLDLFTIQETQGRLDNLHVAMVGDLKYGRTVHSLTQALAKFDGNRFYFIAPDALAMPQYILDMLDEKGIAWSLHSSIEEVMAEVDILYMTRVQKERLDPSEYANVKAQFVLRASDLHNAKANMKVLHPLPRVDEIATDVDKTPHAWYFQQAGNGIFARQALLALVLNRDLVL</sequence>
<dbReference type="EC" id="2.1.3.2" evidence="2"/>
<dbReference type="EMBL" id="AE005674">
    <property type="protein sequence ID" value="AAN45663.1"/>
    <property type="molecule type" value="Genomic_DNA"/>
</dbReference>
<dbReference type="EMBL" id="AE014073">
    <property type="protein sequence ID" value="AAP19451.1"/>
    <property type="molecule type" value="Genomic_DNA"/>
</dbReference>
<dbReference type="RefSeq" id="NP_709956.1">
    <property type="nucleotide sequence ID" value="NC_004337.2"/>
</dbReference>
<dbReference type="RefSeq" id="WP_000013046.1">
    <property type="nucleotide sequence ID" value="NZ_WPGW01000068.1"/>
</dbReference>
<dbReference type="SMR" id="P0A789"/>
<dbReference type="STRING" id="198214.SF4245"/>
<dbReference type="DrugBank" id="DB03459">
    <property type="generic name" value="Sparfosic acid"/>
</dbReference>
<dbReference type="PaxDb" id="198214-SF4245"/>
<dbReference type="GeneID" id="1026558"/>
<dbReference type="GeneID" id="93777579"/>
<dbReference type="KEGG" id="sfl:SF4245"/>
<dbReference type="KEGG" id="sfx:S4507"/>
<dbReference type="PATRIC" id="fig|198214.7.peg.5005"/>
<dbReference type="HOGENOM" id="CLU_043846_1_2_6"/>
<dbReference type="UniPathway" id="UPA00070">
    <property type="reaction ID" value="UER00116"/>
</dbReference>
<dbReference type="Proteomes" id="UP000001006">
    <property type="component" value="Chromosome"/>
</dbReference>
<dbReference type="Proteomes" id="UP000002673">
    <property type="component" value="Chromosome"/>
</dbReference>
<dbReference type="GO" id="GO:0005829">
    <property type="term" value="C:cytosol"/>
    <property type="evidence" value="ECO:0007669"/>
    <property type="project" value="TreeGrafter"/>
</dbReference>
<dbReference type="GO" id="GO:0016597">
    <property type="term" value="F:amino acid binding"/>
    <property type="evidence" value="ECO:0007669"/>
    <property type="project" value="InterPro"/>
</dbReference>
<dbReference type="GO" id="GO:0004070">
    <property type="term" value="F:aspartate carbamoyltransferase activity"/>
    <property type="evidence" value="ECO:0007669"/>
    <property type="project" value="UniProtKB-UniRule"/>
</dbReference>
<dbReference type="GO" id="GO:0006207">
    <property type="term" value="P:'de novo' pyrimidine nucleobase biosynthetic process"/>
    <property type="evidence" value="ECO:0007669"/>
    <property type="project" value="InterPro"/>
</dbReference>
<dbReference type="GO" id="GO:0044205">
    <property type="term" value="P:'de novo' UMP biosynthetic process"/>
    <property type="evidence" value="ECO:0007669"/>
    <property type="project" value="UniProtKB-UniRule"/>
</dbReference>
<dbReference type="GO" id="GO:0006520">
    <property type="term" value="P:amino acid metabolic process"/>
    <property type="evidence" value="ECO:0007669"/>
    <property type="project" value="InterPro"/>
</dbReference>
<dbReference type="FunFam" id="3.40.50.1370:FF:000001">
    <property type="entry name" value="Aspartate carbamoyltransferase"/>
    <property type="match status" value="1"/>
</dbReference>
<dbReference type="FunFam" id="3.40.50.1370:FF:000002">
    <property type="entry name" value="Aspartate carbamoyltransferase 2"/>
    <property type="match status" value="1"/>
</dbReference>
<dbReference type="Gene3D" id="3.40.50.1370">
    <property type="entry name" value="Aspartate/ornithine carbamoyltransferase"/>
    <property type="match status" value="2"/>
</dbReference>
<dbReference type="HAMAP" id="MF_00001">
    <property type="entry name" value="Asp_carb_tr"/>
    <property type="match status" value="1"/>
</dbReference>
<dbReference type="InterPro" id="IPR006132">
    <property type="entry name" value="Asp/Orn_carbamoyltranf_P-bd"/>
</dbReference>
<dbReference type="InterPro" id="IPR006130">
    <property type="entry name" value="Asp/Orn_carbamoylTrfase"/>
</dbReference>
<dbReference type="InterPro" id="IPR036901">
    <property type="entry name" value="Asp/Orn_carbamoylTrfase_sf"/>
</dbReference>
<dbReference type="InterPro" id="IPR002082">
    <property type="entry name" value="Asp_carbamoyltransf"/>
</dbReference>
<dbReference type="InterPro" id="IPR006131">
    <property type="entry name" value="Asp_carbamoyltransf_Asp/Orn-bd"/>
</dbReference>
<dbReference type="NCBIfam" id="TIGR00670">
    <property type="entry name" value="asp_carb_tr"/>
    <property type="match status" value="1"/>
</dbReference>
<dbReference type="NCBIfam" id="NF002032">
    <property type="entry name" value="PRK00856.1"/>
    <property type="match status" value="1"/>
</dbReference>
<dbReference type="PANTHER" id="PTHR45753:SF6">
    <property type="entry name" value="ASPARTATE CARBAMOYLTRANSFERASE"/>
    <property type="match status" value="1"/>
</dbReference>
<dbReference type="PANTHER" id="PTHR45753">
    <property type="entry name" value="ORNITHINE CARBAMOYLTRANSFERASE, MITOCHONDRIAL"/>
    <property type="match status" value="1"/>
</dbReference>
<dbReference type="Pfam" id="PF00185">
    <property type="entry name" value="OTCace"/>
    <property type="match status" value="1"/>
</dbReference>
<dbReference type="Pfam" id="PF02729">
    <property type="entry name" value="OTCace_N"/>
    <property type="match status" value="1"/>
</dbReference>
<dbReference type="PRINTS" id="PR00100">
    <property type="entry name" value="AOTCASE"/>
</dbReference>
<dbReference type="PRINTS" id="PR00101">
    <property type="entry name" value="ATCASE"/>
</dbReference>
<dbReference type="SUPFAM" id="SSF53671">
    <property type="entry name" value="Aspartate/ornithine carbamoyltransferase"/>
    <property type="match status" value="1"/>
</dbReference>
<dbReference type="PROSITE" id="PS00097">
    <property type="entry name" value="CARBAMOYLTRANSFERASE"/>
    <property type="match status" value="1"/>
</dbReference>
<keyword id="KW-0665">Pyrimidine biosynthesis</keyword>
<keyword id="KW-1185">Reference proteome</keyword>
<keyword id="KW-0808">Transferase</keyword>
<accession>P0A789</accession>
<accession>P00479</accession>
<accession>Q47555</accession>
<accession>Q47557</accession>
<feature type="initiator methionine" description="Removed" evidence="1">
    <location>
        <position position="1"/>
    </location>
</feature>
<feature type="chain" id="PRO_0000113191" description="Aspartate carbamoyltransferase catalytic subunit">
    <location>
        <begin position="2"/>
        <end position="311"/>
    </location>
</feature>
<feature type="binding site" evidence="2">
    <location>
        <position position="55"/>
    </location>
    <ligand>
        <name>carbamoyl phosphate</name>
        <dbReference type="ChEBI" id="CHEBI:58228"/>
    </ligand>
</feature>
<feature type="binding site" evidence="2">
    <location>
        <position position="56"/>
    </location>
    <ligand>
        <name>carbamoyl phosphate</name>
        <dbReference type="ChEBI" id="CHEBI:58228"/>
    </ligand>
</feature>
<feature type="binding site" evidence="2">
    <location>
        <position position="85"/>
    </location>
    <ligand>
        <name>L-aspartate</name>
        <dbReference type="ChEBI" id="CHEBI:29991"/>
    </ligand>
</feature>
<feature type="binding site" evidence="2">
    <location>
        <position position="106"/>
    </location>
    <ligand>
        <name>carbamoyl phosphate</name>
        <dbReference type="ChEBI" id="CHEBI:58228"/>
    </ligand>
</feature>
<feature type="binding site" evidence="2">
    <location>
        <position position="135"/>
    </location>
    <ligand>
        <name>carbamoyl phosphate</name>
        <dbReference type="ChEBI" id="CHEBI:58228"/>
    </ligand>
</feature>
<feature type="binding site" evidence="2">
    <location>
        <position position="138"/>
    </location>
    <ligand>
        <name>carbamoyl phosphate</name>
        <dbReference type="ChEBI" id="CHEBI:58228"/>
    </ligand>
</feature>
<feature type="binding site" evidence="2">
    <location>
        <position position="168"/>
    </location>
    <ligand>
        <name>L-aspartate</name>
        <dbReference type="ChEBI" id="CHEBI:29991"/>
    </ligand>
</feature>
<feature type="binding site" evidence="2">
    <location>
        <position position="230"/>
    </location>
    <ligand>
        <name>L-aspartate</name>
        <dbReference type="ChEBI" id="CHEBI:29991"/>
    </ligand>
</feature>
<feature type="binding site" evidence="2">
    <location>
        <position position="268"/>
    </location>
    <ligand>
        <name>carbamoyl phosphate</name>
        <dbReference type="ChEBI" id="CHEBI:58228"/>
    </ligand>
</feature>
<feature type="binding site" evidence="2">
    <location>
        <position position="269"/>
    </location>
    <ligand>
        <name>carbamoyl phosphate</name>
        <dbReference type="ChEBI" id="CHEBI:58228"/>
    </ligand>
</feature>
<gene>
    <name evidence="2" type="primary">pyrB</name>
    <name type="ordered locus">SF4245</name>
    <name type="ordered locus">S4507</name>
</gene>